<name>GREA_RICCK</name>
<organism>
    <name type="scientific">Rickettsia canadensis (strain McKiel)</name>
    <dbReference type="NCBI Taxonomy" id="293613"/>
    <lineage>
        <taxon>Bacteria</taxon>
        <taxon>Pseudomonadati</taxon>
        <taxon>Pseudomonadota</taxon>
        <taxon>Alphaproteobacteria</taxon>
        <taxon>Rickettsiales</taxon>
        <taxon>Rickettsiaceae</taxon>
        <taxon>Rickettsieae</taxon>
        <taxon>Rickettsia</taxon>
        <taxon>belli group</taxon>
    </lineage>
</organism>
<evidence type="ECO:0000255" key="1">
    <source>
        <dbReference type="HAMAP-Rule" id="MF_00105"/>
    </source>
</evidence>
<feature type="chain" id="PRO_1000034294" description="Transcription elongation factor GreA">
    <location>
        <begin position="1"/>
        <end position="162"/>
    </location>
</feature>
<feature type="coiled-coil region" evidence="1">
    <location>
        <begin position="45"/>
        <end position="75"/>
    </location>
</feature>
<reference key="1">
    <citation type="submission" date="2007-09" db="EMBL/GenBank/DDBJ databases">
        <title>Complete genome sequence of Rickettsia canadensis.</title>
        <authorList>
            <person name="Madan A."/>
            <person name="Fahey J."/>
            <person name="Helton E."/>
            <person name="Ketteman M."/>
            <person name="Madan A."/>
            <person name="Rodrigues S."/>
            <person name="Sanchez A."/>
            <person name="Whiting M."/>
            <person name="Dasch G."/>
            <person name="Eremeeva M."/>
        </authorList>
    </citation>
    <scope>NUCLEOTIDE SEQUENCE [LARGE SCALE GENOMIC DNA]</scope>
    <source>
        <strain>McKiel</strain>
    </source>
</reference>
<sequence length="162" mass="18155">MNTKFPITAKGFKKLEHELKHLKHVERKKISEDIAEAREHGDLSENAEYEAAREKQAFIEGRIKELEDMAARAEIIDISKLSGDNIKFGATVTLIDDDTEEKVTYIVVGEYEADITRKRVSIASPIAKALIGKSVGDFVEVTTPKGSKSYEVVEVEYKALEL</sequence>
<dbReference type="EMBL" id="CP000409">
    <property type="protein sequence ID" value="ABV74016.1"/>
    <property type="molecule type" value="Genomic_DNA"/>
</dbReference>
<dbReference type="RefSeq" id="WP_012149211.1">
    <property type="nucleotide sequence ID" value="NC_009879.1"/>
</dbReference>
<dbReference type="SMR" id="A8F083"/>
<dbReference type="STRING" id="293613.A1E_05510"/>
<dbReference type="KEGG" id="rcm:A1E_05510"/>
<dbReference type="eggNOG" id="COG0782">
    <property type="taxonomic scope" value="Bacteria"/>
</dbReference>
<dbReference type="HOGENOM" id="CLU_101379_2_0_5"/>
<dbReference type="Proteomes" id="UP000007056">
    <property type="component" value="Chromosome"/>
</dbReference>
<dbReference type="GO" id="GO:0003677">
    <property type="term" value="F:DNA binding"/>
    <property type="evidence" value="ECO:0007669"/>
    <property type="project" value="UniProtKB-UniRule"/>
</dbReference>
<dbReference type="GO" id="GO:0070063">
    <property type="term" value="F:RNA polymerase binding"/>
    <property type="evidence" value="ECO:0007669"/>
    <property type="project" value="InterPro"/>
</dbReference>
<dbReference type="GO" id="GO:0006354">
    <property type="term" value="P:DNA-templated transcription elongation"/>
    <property type="evidence" value="ECO:0007669"/>
    <property type="project" value="TreeGrafter"/>
</dbReference>
<dbReference type="GO" id="GO:0032784">
    <property type="term" value="P:regulation of DNA-templated transcription elongation"/>
    <property type="evidence" value="ECO:0007669"/>
    <property type="project" value="UniProtKB-UniRule"/>
</dbReference>
<dbReference type="FunFam" id="1.10.287.180:FF:000001">
    <property type="entry name" value="Transcription elongation factor GreA"/>
    <property type="match status" value="1"/>
</dbReference>
<dbReference type="FunFam" id="3.10.50.30:FF:000001">
    <property type="entry name" value="Transcription elongation factor GreA"/>
    <property type="match status" value="1"/>
</dbReference>
<dbReference type="Gene3D" id="3.10.50.30">
    <property type="entry name" value="Transcription elongation factor, GreA/GreB, C-terminal domain"/>
    <property type="match status" value="1"/>
</dbReference>
<dbReference type="Gene3D" id="1.10.287.180">
    <property type="entry name" value="Transcription elongation factor, GreA/GreB, N-terminal domain"/>
    <property type="match status" value="1"/>
</dbReference>
<dbReference type="HAMAP" id="MF_00105">
    <property type="entry name" value="GreA_GreB"/>
    <property type="match status" value="1"/>
</dbReference>
<dbReference type="InterPro" id="IPR036953">
    <property type="entry name" value="GreA/GreB_C_sf"/>
</dbReference>
<dbReference type="InterPro" id="IPR018151">
    <property type="entry name" value="TF_GreA/GreB_CS"/>
</dbReference>
<dbReference type="InterPro" id="IPR006359">
    <property type="entry name" value="Tscrpt_elong_fac_GreA"/>
</dbReference>
<dbReference type="InterPro" id="IPR028624">
    <property type="entry name" value="Tscrpt_elong_fac_GreA/B"/>
</dbReference>
<dbReference type="InterPro" id="IPR001437">
    <property type="entry name" value="Tscrpt_elong_fac_GreA/B_C"/>
</dbReference>
<dbReference type="InterPro" id="IPR023459">
    <property type="entry name" value="Tscrpt_elong_fac_GreA/B_fam"/>
</dbReference>
<dbReference type="InterPro" id="IPR022691">
    <property type="entry name" value="Tscrpt_elong_fac_GreA/B_N"/>
</dbReference>
<dbReference type="InterPro" id="IPR036805">
    <property type="entry name" value="Tscrpt_elong_fac_GreA/B_N_sf"/>
</dbReference>
<dbReference type="NCBIfam" id="TIGR01462">
    <property type="entry name" value="greA"/>
    <property type="match status" value="1"/>
</dbReference>
<dbReference type="NCBIfam" id="NF001261">
    <property type="entry name" value="PRK00226.1-2"/>
    <property type="match status" value="1"/>
</dbReference>
<dbReference type="NCBIfam" id="NF001263">
    <property type="entry name" value="PRK00226.1-4"/>
    <property type="match status" value="1"/>
</dbReference>
<dbReference type="NCBIfam" id="NF001264">
    <property type="entry name" value="PRK00226.1-5"/>
    <property type="match status" value="1"/>
</dbReference>
<dbReference type="PANTHER" id="PTHR30437">
    <property type="entry name" value="TRANSCRIPTION ELONGATION FACTOR GREA"/>
    <property type="match status" value="1"/>
</dbReference>
<dbReference type="PANTHER" id="PTHR30437:SF4">
    <property type="entry name" value="TRANSCRIPTION ELONGATION FACTOR GREA"/>
    <property type="match status" value="1"/>
</dbReference>
<dbReference type="Pfam" id="PF01272">
    <property type="entry name" value="GreA_GreB"/>
    <property type="match status" value="1"/>
</dbReference>
<dbReference type="Pfam" id="PF03449">
    <property type="entry name" value="GreA_GreB_N"/>
    <property type="match status" value="1"/>
</dbReference>
<dbReference type="PIRSF" id="PIRSF006092">
    <property type="entry name" value="GreA_GreB"/>
    <property type="match status" value="1"/>
</dbReference>
<dbReference type="SUPFAM" id="SSF54534">
    <property type="entry name" value="FKBP-like"/>
    <property type="match status" value="1"/>
</dbReference>
<dbReference type="SUPFAM" id="SSF46557">
    <property type="entry name" value="GreA transcript cleavage protein, N-terminal domain"/>
    <property type="match status" value="1"/>
</dbReference>
<dbReference type="PROSITE" id="PS00829">
    <property type="entry name" value="GREAB_1"/>
    <property type="match status" value="1"/>
</dbReference>
<dbReference type="PROSITE" id="PS00830">
    <property type="entry name" value="GREAB_2"/>
    <property type="match status" value="1"/>
</dbReference>
<keyword id="KW-0175">Coiled coil</keyword>
<keyword id="KW-0238">DNA-binding</keyword>
<keyword id="KW-0804">Transcription</keyword>
<keyword id="KW-0805">Transcription regulation</keyword>
<comment type="function">
    <text evidence="1">Necessary for efficient RNA polymerase transcription elongation past template-encoded arresting sites. The arresting sites in DNA have the property of trapping a certain fraction of elongating RNA polymerases that pass through, resulting in locked ternary complexes. Cleavage of the nascent transcript by cleavage factors such as GreA or GreB allows the resumption of elongation from the new 3'terminus. GreA releases sequences of 2 to 3 nucleotides.</text>
</comment>
<comment type="similarity">
    <text evidence="1">Belongs to the GreA/GreB family.</text>
</comment>
<gene>
    <name evidence="1" type="primary">greA</name>
    <name type="ordered locus">A1E_05510</name>
</gene>
<accession>A8F083</accession>
<proteinExistence type="inferred from homology"/>
<protein>
    <recommendedName>
        <fullName evidence="1">Transcription elongation factor GreA</fullName>
    </recommendedName>
    <alternativeName>
        <fullName evidence="1">Transcript cleavage factor GreA</fullName>
    </alternativeName>
</protein>